<name>EX7L_LACCB</name>
<reference key="1">
    <citation type="submission" date="2008-06" db="EMBL/GenBank/DDBJ databases">
        <title>Lactobacillus casei BL23 complete genome sequence.</title>
        <authorList>
            <person name="Maze A."/>
            <person name="Boel G."/>
            <person name="Bourand A."/>
            <person name="Loux V."/>
            <person name="Gibrat J.F."/>
            <person name="Zuniga M."/>
            <person name="Hartke A."/>
            <person name="Deutscher J."/>
        </authorList>
    </citation>
    <scope>NUCLEOTIDE SEQUENCE [LARGE SCALE GENOMIC DNA]</scope>
    <source>
        <strain>BL23</strain>
    </source>
</reference>
<evidence type="ECO:0000255" key="1">
    <source>
        <dbReference type="HAMAP-Rule" id="MF_00378"/>
    </source>
</evidence>
<comment type="function">
    <text evidence="1">Bidirectionally degrades single-stranded DNA into large acid-insoluble oligonucleotides, which are then degraded further into small acid-soluble oligonucleotides.</text>
</comment>
<comment type="catalytic activity">
    <reaction evidence="1">
        <text>Exonucleolytic cleavage in either 5'- to 3'- or 3'- to 5'-direction to yield nucleoside 5'-phosphates.</text>
        <dbReference type="EC" id="3.1.11.6"/>
    </reaction>
</comment>
<comment type="subunit">
    <text evidence="1">Heterooligomer composed of large and small subunits.</text>
</comment>
<comment type="subcellular location">
    <subcellularLocation>
        <location evidence="1">Cytoplasm</location>
    </subcellularLocation>
</comment>
<comment type="similarity">
    <text evidence="1">Belongs to the XseA family.</text>
</comment>
<accession>B3WEY3</accession>
<protein>
    <recommendedName>
        <fullName evidence="1">Exodeoxyribonuclease 7 large subunit</fullName>
        <ecNumber evidence="1">3.1.11.6</ecNumber>
    </recommendedName>
    <alternativeName>
        <fullName evidence="1">Exodeoxyribonuclease VII large subunit</fullName>
        <shortName evidence="1">Exonuclease VII large subunit</shortName>
    </alternativeName>
</protein>
<keyword id="KW-0963">Cytoplasm</keyword>
<keyword id="KW-0269">Exonuclease</keyword>
<keyword id="KW-0378">Hydrolase</keyword>
<keyword id="KW-0540">Nuclease</keyword>
<proteinExistence type="inferred from homology"/>
<feature type="chain" id="PRO_1000122069" description="Exodeoxyribonuclease 7 large subunit">
    <location>
        <begin position="1"/>
        <end position="449"/>
    </location>
</feature>
<dbReference type="EC" id="3.1.11.6" evidence="1"/>
<dbReference type="EMBL" id="FM177140">
    <property type="protein sequence ID" value="CAQ66934.1"/>
    <property type="molecule type" value="Genomic_DNA"/>
</dbReference>
<dbReference type="SMR" id="B3WEY3"/>
<dbReference type="KEGG" id="lcb:LCABL_18540"/>
<dbReference type="HOGENOM" id="CLU_023625_3_1_9"/>
<dbReference type="GO" id="GO:0005737">
    <property type="term" value="C:cytoplasm"/>
    <property type="evidence" value="ECO:0007669"/>
    <property type="project" value="UniProtKB-SubCell"/>
</dbReference>
<dbReference type="GO" id="GO:0009318">
    <property type="term" value="C:exodeoxyribonuclease VII complex"/>
    <property type="evidence" value="ECO:0007669"/>
    <property type="project" value="InterPro"/>
</dbReference>
<dbReference type="GO" id="GO:0008855">
    <property type="term" value="F:exodeoxyribonuclease VII activity"/>
    <property type="evidence" value="ECO:0007669"/>
    <property type="project" value="UniProtKB-UniRule"/>
</dbReference>
<dbReference type="GO" id="GO:0003676">
    <property type="term" value="F:nucleic acid binding"/>
    <property type="evidence" value="ECO:0007669"/>
    <property type="project" value="InterPro"/>
</dbReference>
<dbReference type="GO" id="GO:0006308">
    <property type="term" value="P:DNA catabolic process"/>
    <property type="evidence" value="ECO:0007669"/>
    <property type="project" value="UniProtKB-UniRule"/>
</dbReference>
<dbReference type="CDD" id="cd04489">
    <property type="entry name" value="ExoVII_LU_OBF"/>
    <property type="match status" value="1"/>
</dbReference>
<dbReference type="HAMAP" id="MF_00378">
    <property type="entry name" value="Exonuc_7_L"/>
    <property type="match status" value="1"/>
</dbReference>
<dbReference type="InterPro" id="IPR003753">
    <property type="entry name" value="Exonuc_VII_L"/>
</dbReference>
<dbReference type="InterPro" id="IPR020579">
    <property type="entry name" value="Exonuc_VII_lsu_C"/>
</dbReference>
<dbReference type="InterPro" id="IPR025824">
    <property type="entry name" value="OB-fold_nuc-bd_dom"/>
</dbReference>
<dbReference type="NCBIfam" id="TIGR00237">
    <property type="entry name" value="xseA"/>
    <property type="match status" value="1"/>
</dbReference>
<dbReference type="PANTHER" id="PTHR30008">
    <property type="entry name" value="EXODEOXYRIBONUCLEASE 7 LARGE SUBUNIT"/>
    <property type="match status" value="1"/>
</dbReference>
<dbReference type="PANTHER" id="PTHR30008:SF0">
    <property type="entry name" value="EXODEOXYRIBONUCLEASE 7 LARGE SUBUNIT"/>
    <property type="match status" value="1"/>
</dbReference>
<dbReference type="Pfam" id="PF02601">
    <property type="entry name" value="Exonuc_VII_L"/>
    <property type="match status" value="1"/>
</dbReference>
<dbReference type="Pfam" id="PF13742">
    <property type="entry name" value="tRNA_anti_2"/>
    <property type="match status" value="1"/>
</dbReference>
<gene>
    <name evidence="1" type="primary">xseA</name>
    <name type="ordered locus">LCABL_18540</name>
</gene>
<sequence>MVDASQYLSVTALTQYLKRKFDADPYLAKVYLTGEISNYRKRVGNQYFSLKDDHAKIGALMFRNAFSKVQFDLEEGMKVLVVGRVSLYEPSGEYRLIVEHLEPDGVGALYQAFEQLKKKLAAEGLFDRNQRPLPLFPKRVAVVTSPSGAVIQDIMTTVARRYPILQLTLFPAVVQGDQAADSLVKRLNQIKTIGGFDAVIIGRGGGSIEDLWPFNEEKVARALVDMPMPVVSSVGHETDTTITDFIADRRAATPTAAAEIVTPVTLIDALNRISEDRVRLVNAMHNRLKNAAIRVQRSAQSVVLTQPDRLYDQYVQRVDQFQQRLQQSMHNRLREADHRLAMAASQLDGRQLFIRLVNLQRQVTGDRHRLDQAMRGLVKTKRQAFASAVSGLDHLSPLKILGRGFAYVTDEQGQMLKSLSDYELDQDIHIHVADGQVGAHVTTKEKTHG</sequence>
<organism>
    <name type="scientific">Lacticaseibacillus casei (strain BL23)</name>
    <name type="common">Lactobacillus casei</name>
    <dbReference type="NCBI Taxonomy" id="543734"/>
    <lineage>
        <taxon>Bacteria</taxon>
        <taxon>Bacillati</taxon>
        <taxon>Bacillota</taxon>
        <taxon>Bacilli</taxon>
        <taxon>Lactobacillales</taxon>
        <taxon>Lactobacillaceae</taxon>
        <taxon>Lacticaseibacillus</taxon>
    </lineage>
</organism>